<sequence>MDTWKVGPVELKSRLILGSGKYEDFGVMREAIAAAKAEVVTVSVRRVELKAPGHVGLLEALEGVRLLPNTAGARTAEEAVRLARLGRLLTGERWVKLEVIPDPTYLLPDPLETLKAAERLIEEDFLVLPYMGPDLVLAKRLAALGTATVMPLAAPIGSGWGVRTRALLELFAREKASLPPVVVDAGLGLPSHAAEVMELGLDAVLVNTAIAEAQDPPAMAEAFRLAVEAGRKAYLAGPMRPREAASPSSPVEGVPFTPTGPRPGRGPQ</sequence>
<evidence type="ECO:0000255" key="1">
    <source>
        <dbReference type="HAMAP-Rule" id="MF_00443"/>
    </source>
</evidence>
<evidence type="ECO:0000256" key="2">
    <source>
        <dbReference type="SAM" id="MobiDB-lite"/>
    </source>
</evidence>
<evidence type="ECO:0007829" key="3">
    <source>
        <dbReference type="PDB" id="2HTM"/>
    </source>
</evidence>
<name>THIG_THET8</name>
<accession>Q5SKG7</accession>
<proteinExistence type="evidence at protein level"/>
<dbReference type="EC" id="2.8.1.10" evidence="1"/>
<dbReference type="EMBL" id="AP008226">
    <property type="protein sequence ID" value="BAD70499.1"/>
    <property type="molecule type" value="Genomic_DNA"/>
</dbReference>
<dbReference type="RefSeq" id="WP_011228115.1">
    <property type="nucleotide sequence ID" value="NC_006461.1"/>
</dbReference>
<dbReference type="RefSeq" id="YP_143942.1">
    <property type="nucleotide sequence ID" value="NC_006461.1"/>
</dbReference>
<dbReference type="PDB" id="2HTM">
    <property type="method" value="X-ray"/>
    <property type="resolution" value="2.30 A"/>
    <property type="chains" value="A/B/C/D=1-268"/>
</dbReference>
<dbReference type="PDBsum" id="2HTM"/>
<dbReference type="SMR" id="Q5SKG7"/>
<dbReference type="EnsemblBacteria" id="BAD70499">
    <property type="protein sequence ID" value="BAD70499"/>
    <property type="gene ID" value="BAD70499"/>
</dbReference>
<dbReference type="GeneID" id="3168363"/>
<dbReference type="KEGG" id="ttj:TTHA0676"/>
<dbReference type="PATRIC" id="fig|300852.9.peg.670"/>
<dbReference type="eggNOG" id="COG2022">
    <property type="taxonomic scope" value="Bacteria"/>
</dbReference>
<dbReference type="HOGENOM" id="CLU_062233_1_0_0"/>
<dbReference type="PhylomeDB" id="Q5SKG7"/>
<dbReference type="UniPathway" id="UPA00060"/>
<dbReference type="EvolutionaryTrace" id="Q5SKG7"/>
<dbReference type="Proteomes" id="UP000000532">
    <property type="component" value="Chromosome"/>
</dbReference>
<dbReference type="GO" id="GO:0005737">
    <property type="term" value="C:cytoplasm"/>
    <property type="evidence" value="ECO:0007669"/>
    <property type="project" value="UniProtKB-SubCell"/>
</dbReference>
<dbReference type="GO" id="GO:1990107">
    <property type="term" value="F:thiazole synthase activity"/>
    <property type="evidence" value="ECO:0007669"/>
    <property type="project" value="UniProtKB-EC"/>
</dbReference>
<dbReference type="GO" id="GO:0009229">
    <property type="term" value="P:thiamine diphosphate biosynthetic process"/>
    <property type="evidence" value="ECO:0007669"/>
    <property type="project" value="UniProtKB-UniRule"/>
</dbReference>
<dbReference type="CDD" id="cd04728">
    <property type="entry name" value="ThiG"/>
    <property type="match status" value="1"/>
</dbReference>
<dbReference type="Gene3D" id="3.20.20.70">
    <property type="entry name" value="Aldolase class I"/>
    <property type="match status" value="1"/>
</dbReference>
<dbReference type="HAMAP" id="MF_00443">
    <property type="entry name" value="ThiG"/>
    <property type="match status" value="1"/>
</dbReference>
<dbReference type="InterPro" id="IPR013785">
    <property type="entry name" value="Aldolase_TIM"/>
</dbReference>
<dbReference type="InterPro" id="IPR033983">
    <property type="entry name" value="Thiazole_synthase_ThiG"/>
</dbReference>
<dbReference type="InterPro" id="IPR008867">
    <property type="entry name" value="ThiG"/>
</dbReference>
<dbReference type="PANTHER" id="PTHR34266">
    <property type="entry name" value="THIAZOLE SYNTHASE"/>
    <property type="match status" value="1"/>
</dbReference>
<dbReference type="PANTHER" id="PTHR34266:SF2">
    <property type="entry name" value="THIAZOLE SYNTHASE"/>
    <property type="match status" value="1"/>
</dbReference>
<dbReference type="Pfam" id="PF05690">
    <property type="entry name" value="ThiG"/>
    <property type="match status" value="1"/>
</dbReference>
<dbReference type="SUPFAM" id="SSF110399">
    <property type="entry name" value="ThiG-like"/>
    <property type="match status" value="1"/>
</dbReference>
<feature type="chain" id="PRO_0000162869" description="Thiazole synthase">
    <location>
        <begin position="1"/>
        <end position="268"/>
    </location>
</feature>
<feature type="region of interest" description="Disordered" evidence="2">
    <location>
        <begin position="238"/>
        <end position="268"/>
    </location>
</feature>
<feature type="compositionally biased region" description="Pro residues" evidence="2">
    <location>
        <begin position="258"/>
        <end position="268"/>
    </location>
</feature>
<feature type="active site" description="Schiff-base intermediate with DXP" evidence="1">
    <location>
        <position position="96"/>
    </location>
</feature>
<feature type="binding site" evidence="1">
    <location>
        <position position="157"/>
    </location>
    <ligand>
        <name>1-deoxy-D-xylulose 5-phosphate</name>
        <dbReference type="ChEBI" id="CHEBI:57792"/>
    </ligand>
</feature>
<feature type="binding site" evidence="1">
    <location>
        <begin position="185"/>
        <end position="186"/>
    </location>
    <ligand>
        <name>1-deoxy-D-xylulose 5-phosphate</name>
        <dbReference type="ChEBI" id="CHEBI:57792"/>
    </ligand>
</feature>
<feature type="binding site" evidence="1">
    <location>
        <begin position="207"/>
        <end position="208"/>
    </location>
    <ligand>
        <name>1-deoxy-D-xylulose 5-phosphate</name>
        <dbReference type="ChEBI" id="CHEBI:57792"/>
    </ligand>
</feature>
<feature type="strand" evidence="3">
    <location>
        <begin position="4"/>
        <end position="6"/>
    </location>
</feature>
<feature type="strand" evidence="3">
    <location>
        <begin position="9"/>
        <end position="11"/>
    </location>
</feature>
<feature type="strand" evidence="3">
    <location>
        <begin position="14"/>
        <end position="18"/>
    </location>
</feature>
<feature type="helix" evidence="3">
    <location>
        <begin position="25"/>
        <end position="34"/>
    </location>
</feature>
<feature type="strand" evidence="3">
    <location>
        <begin position="38"/>
        <end position="46"/>
    </location>
</feature>
<feature type="helix" evidence="3">
    <location>
        <begin position="57"/>
        <end position="60"/>
    </location>
</feature>
<feature type="turn" evidence="3">
    <location>
        <begin position="61"/>
        <end position="63"/>
    </location>
</feature>
<feature type="strand" evidence="3">
    <location>
        <begin position="64"/>
        <end position="69"/>
    </location>
</feature>
<feature type="helix" evidence="3">
    <location>
        <begin position="76"/>
        <end position="90"/>
    </location>
</feature>
<feature type="strand" evidence="3">
    <location>
        <begin position="93"/>
        <end position="96"/>
    </location>
</feature>
<feature type="turn" evidence="3">
    <location>
        <begin position="103"/>
        <end position="105"/>
    </location>
</feature>
<feature type="helix" evidence="3">
    <location>
        <begin position="110"/>
        <end position="122"/>
    </location>
</feature>
<feature type="helix" evidence="3">
    <location>
        <begin position="135"/>
        <end position="144"/>
    </location>
</feature>
<feature type="strand" evidence="3">
    <location>
        <begin position="149"/>
        <end position="155"/>
    </location>
</feature>
<feature type="turn" evidence="3">
    <location>
        <begin position="156"/>
        <end position="158"/>
    </location>
</feature>
<feature type="helix" evidence="3">
    <location>
        <begin position="165"/>
        <end position="173"/>
    </location>
</feature>
<feature type="turn" evidence="3">
    <location>
        <begin position="174"/>
        <end position="177"/>
    </location>
</feature>
<feature type="strand" evidence="3">
    <location>
        <begin position="181"/>
        <end position="185"/>
    </location>
</feature>
<feature type="helix" evidence="3">
    <location>
        <begin position="190"/>
        <end position="198"/>
    </location>
</feature>
<feature type="strand" evidence="3">
    <location>
        <begin position="203"/>
        <end position="207"/>
    </location>
</feature>
<feature type="helix" evidence="3">
    <location>
        <begin position="208"/>
        <end position="211"/>
    </location>
</feature>
<feature type="strand" evidence="3">
    <location>
        <begin position="213"/>
        <end position="215"/>
    </location>
</feature>
<feature type="helix" evidence="3">
    <location>
        <begin position="216"/>
        <end position="236"/>
    </location>
</feature>
<keyword id="KW-0002">3D-structure</keyword>
<keyword id="KW-0963">Cytoplasm</keyword>
<keyword id="KW-1185">Reference proteome</keyword>
<keyword id="KW-0704">Schiff base</keyword>
<keyword id="KW-0784">Thiamine biosynthesis</keyword>
<keyword id="KW-0808">Transferase</keyword>
<gene>
    <name evidence="1" type="primary">thiG</name>
    <name type="ordered locus">TTHA0676</name>
</gene>
<protein>
    <recommendedName>
        <fullName evidence="1">Thiazole synthase</fullName>
        <ecNumber evidence="1">2.8.1.10</ecNumber>
    </recommendedName>
</protein>
<comment type="function">
    <text evidence="1">Catalyzes the rearrangement of 1-deoxy-D-xylulose 5-phosphate (DXP) to produce the thiazole phosphate moiety of thiamine. Sulfur is provided by the thiocarboxylate moiety of the carrier protein ThiS. In vitro, sulfur can be provided by H(2)S.</text>
</comment>
<comment type="catalytic activity">
    <reaction evidence="1">
        <text>[ThiS sulfur-carrier protein]-C-terminal-Gly-aminoethanethioate + 2-iminoacetate + 1-deoxy-D-xylulose 5-phosphate = [ThiS sulfur-carrier protein]-C-terminal Gly-Gly + 2-[(2R,5Z)-2-carboxy-4-methylthiazol-5(2H)-ylidene]ethyl phosphate + 2 H2O + H(+)</text>
        <dbReference type="Rhea" id="RHEA:26297"/>
        <dbReference type="Rhea" id="RHEA-COMP:12909"/>
        <dbReference type="Rhea" id="RHEA-COMP:19908"/>
        <dbReference type="ChEBI" id="CHEBI:15377"/>
        <dbReference type="ChEBI" id="CHEBI:15378"/>
        <dbReference type="ChEBI" id="CHEBI:57792"/>
        <dbReference type="ChEBI" id="CHEBI:62899"/>
        <dbReference type="ChEBI" id="CHEBI:77846"/>
        <dbReference type="ChEBI" id="CHEBI:90778"/>
        <dbReference type="ChEBI" id="CHEBI:232372"/>
        <dbReference type="EC" id="2.8.1.10"/>
    </reaction>
</comment>
<comment type="pathway">
    <text evidence="1">Cofactor biosynthesis; thiamine diphosphate biosynthesis.</text>
</comment>
<comment type="subunit">
    <text evidence="1">Homotetramer. Forms heterodimers with either ThiH or ThiS.</text>
</comment>
<comment type="subcellular location">
    <subcellularLocation>
        <location evidence="1">Cytoplasm</location>
    </subcellularLocation>
</comment>
<comment type="similarity">
    <text evidence="1">Belongs to the ThiG family.</text>
</comment>
<organism>
    <name type="scientific">Thermus thermophilus (strain ATCC 27634 / DSM 579 / HB8)</name>
    <dbReference type="NCBI Taxonomy" id="300852"/>
    <lineage>
        <taxon>Bacteria</taxon>
        <taxon>Thermotogati</taxon>
        <taxon>Deinococcota</taxon>
        <taxon>Deinococci</taxon>
        <taxon>Thermales</taxon>
        <taxon>Thermaceae</taxon>
        <taxon>Thermus</taxon>
    </lineage>
</organism>
<reference key="1">
    <citation type="submission" date="2004-11" db="EMBL/GenBank/DDBJ databases">
        <title>Complete genome sequence of Thermus thermophilus HB8.</title>
        <authorList>
            <person name="Masui R."/>
            <person name="Kurokawa K."/>
            <person name="Nakagawa N."/>
            <person name="Tokunaga F."/>
            <person name="Koyama Y."/>
            <person name="Shibata T."/>
            <person name="Oshima T."/>
            <person name="Yokoyama S."/>
            <person name="Yasunaga T."/>
            <person name="Kuramitsu S."/>
        </authorList>
    </citation>
    <scope>NUCLEOTIDE SEQUENCE [LARGE SCALE GENOMIC DNA]</scope>
    <source>
        <strain>ATCC 27634 / DSM 579 / HB8</strain>
    </source>
</reference>
<reference key="2">
    <citation type="submission" date="2009-02" db="PDB data bank">
        <title>Crystal structure of ttha0676 from Thermus thermophilus HB8.</title>
        <authorList>
            <consortium name="RIKEN structural genomics initiative (RSGI)"/>
        </authorList>
    </citation>
    <scope>X-RAY CRYSTALLOGRAPHY (2.3 ANGSTROMS)</scope>
</reference>